<dbReference type="EC" id="3.1.1.74" evidence="5"/>
<dbReference type="EMBL" id="DS499603">
    <property type="protein sequence ID" value="EDP47389.1"/>
    <property type="molecule type" value="Genomic_DNA"/>
</dbReference>
<dbReference type="SMR" id="B0YEP5"/>
<dbReference type="ESTHER" id="aspfu-q4w9z4">
    <property type="family name" value="Cutinase"/>
</dbReference>
<dbReference type="EnsemblFungi" id="EDP47389">
    <property type="protein sequence ID" value="EDP47389"/>
    <property type="gene ID" value="AFUB_099910"/>
</dbReference>
<dbReference type="VEuPathDB" id="FungiDB:AFUB_099910"/>
<dbReference type="HOGENOM" id="CLU_040058_2_0_1"/>
<dbReference type="OrthoDB" id="67452at5052"/>
<dbReference type="PhylomeDB" id="B0YEP5"/>
<dbReference type="Proteomes" id="UP000001699">
    <property type="component" value="Unassembled WGS sequence"/>
</dbReference>
<dbReference type="GO" id="GO:0005576">
    <property type="term" value="C:extracellular region"/>
    <property type="evidence" value="ECO:0007669"/>
    <property type="project" value="UniProtKB-SubCell"/>
</dbReference>
<dbReference type="GO" id="GO:0050525">
    <property type="term" value="F:cutinase activity"/>
    <property type="evidence" value="ECO:0000250"/>
    <property type="project" value="UniProtKB"/>
</dbReference>
<dbReference type="GO" id="GO:0016052">
    <property type="term" value="P:carbohydrate catabolic process"/>
    <property type="evidence" value="ECO:0007669"/>
    <property type="project" value="TreeGrafter"/>
</dbReference>
<dbReference type="FunFam" id="3.40.50.1820:FF:000235">
    <property type="entry name" value="Cutinase 1"/>
    <property type="match status" value="1"/>
</dbReference>
<dbReference type="Gene3D" id="3.40.50.1820">
    <property type="entry name" value="alpha/beta hydrolase"/>
    <property type="match status" value="1"/>
</dbReference>
<dbReference type="InterPro" id="IPR029058">
    <property type="entry name" value="AB_hydrolase_fold"/>
</dbReference>
<dbReference type="InterPro" id="IPR000675">
    <property type="entry name" value="Cutinase/axe"/>
</dbReference>
<dbReference type="InterPro" id="IPR043580">
    <property type="entry name" value="CUTINASE_1"/>
</dbReference>
<dbReference type="InterPro" id="IPR011150">
    <property type="entry name" value="Cutinase_monf"/>
</dbReference>
<dbReference type="PANTHER" id="PTHR48250:SF3">
    <property type="entry name" value="CUTINASE 1-RELATED"/>
    <property type="match status" value="1"/>
</dbReference>
<dbReference type="PANTHER" id="PTHR48250">
    <property type="entry name" value="CUTINASE 2-RELATED"/>
    <property type="match status" value="1"/>
</dbReference>
<dbReference type="Pfam" id="PF01083">
    <property type="entry name" value="Cutinase"/>
    <property type="match status" value="1"/>
</dbReference>
<dbReference type="PRINTS" id="PR00129">
    <property type="entry name" value="CUTINASE"/>
</dbReference>
<dbReference type="SMART" id="SM01110">
    <property type="entry name" value="Cutinase"/>
    <property type="match status" value="1"/>
</dbReference>
<dbReference type="SUPFAM" id="SSF53474">
    <property type="entry name" value="alpha/beta-Hydrolases"/>
    <property type="match status" value="1"/>
</dbReference>
<dbReference type="PROSITE" id="PS00155">
    <property type="entry name" value="CUTINASE_1"/>
    <property type="match status" value="1"/>
</dbReference>
<feature type="signal peptide" evidence="4">
    <location>
        <begin position="1"/>
        <end position="17"/>
    </location>
</feature>
<feature type="chain" id="PRO_0000395253" description="Probable cutinase 3">
    <location>
        <begin position="18"/>
        <end position="217"/>
    </location>
</feature>
<feature type="active site" description="Nucleophile" evidence="5">
    <location>
        <position position="129"/>
    </location>
</feature>
<feature type="active site" evidence="5">
    <location>
        <position position="184"/>
    </location>
</feature>
<feature type="active site" description="Proton donor/acceptor" evidence="5">
    <location>
        <position position="197"/>
    </location>
</feature>
<feature type="site" description="Transition state stabilizer" evidence="1">
    <location>
        <position position="50"/>
    </location>
</feature>
<feature type="site" description="Transition state stabilizer" evidence="1">
    <location>
        <position position="130"/>
    </location>
</feature>
<feature type="disulfide bond" evidence="3">
    <location>
        <begin position="39"/>
        <end position="118"/>
    </location>
</feature>
<feature type="disulfide bond" evidence="3">
    <location>
        <begin position="65"/>
        <end position="79"/>
    </location>
</feature>
<feature type="disulfide bond" evidence="3">
    <location>
        <begin position="180"/>
        <end position="187"/>
    </location>
</feature>
<protein>
    <recommendedName>
        <fullName>Probable cutinase 3</fullName>
        <ecNumber evidence="5">3.1.1.74</ecNumber>
    </recommendedName>
    <alternativeName>
        <fullName>Cutin hydrolase 3</fullName>
    </alternativeName>
</protein>
<keyword id="KW-1015">Disulfide bond</keyword>
<keyword id="KW-0378">Hydrolase</keyword>
<keyword id="KW-0964">Secreted</keyword>
<keyword id="KW-0719">Serine esterase</keyword>
<keyword id="KW-0732">Signal</keyword>
<organism>
    <name type="scientific">Aspergillus fumigatus (strain CBS 144.89 / FGSC A1163 / CEA10)</name>
    <name type="common">Neosartorya fumigata</name>
    <dbReference type="NCBI Taxonomy" id="451804"/>
    <lineage>
        <taxon>Eukaryota</taxon>
        <taxon>Fungi</taxon>
        <taxon>Dikarya</taxon>
        <taxon>Ascomycota</taxon>
        <taxon>Pezizomycotina</taxon>
        <taxon>Eurotiomycetes</taxon>
        <taxon>Eurotiomycetidae</taxon>
        <taxon>Eurotiales</taxon>
        <taxon>Aspergillaceae</taxon>
        <taxon>Aspergillus</taxon>
        <taxon>Aspergillus subgen. Fumigati</taxon>
    </lineage>
</organism>
<accession>B0YEP5</accession>
<sequence>MSLRSLFVAGLATLALAVPAPQIQARQGMSSNELESGPCRDVTFIFARGSTEQGNMGLIVGPGVCSSLKKDLGSDKVACQGVGGAYTAQLAPNFLSQNTNQASINAATDMFDLANTKCPNTKIVAGGYSQGSAVIDNTIQALGSDLKAKVKGVVLFGFTRNVADKGQIPGYPKDQTKIYCAVGDMVCVNTLIITPAHLTYGADAGDAAKFLASKVQE</sequence>
<gene>
    <name type="ORF">AFUB_099910</name>
</gene>
<name>CUTI3_ASPFC</name>
<comment type="function">
    <text evidence="1">Catalyzes the hydrolysis of complex carboxylic polyesters found in the cell wall of plants (By similarity). Degrades cutin, a macromolecule that forms the structure of the plant cuticle (By similarity).</text>
</comment>
<comment type="catalytic activity">
    <reaction evidence="5">
        <text>cutin + H2O = cutin monomers.</text>
        <dbReference type="EC" id="3.1.1.74"/>
    </reaction>
</comment>
<comment type="subcellular location">
    <subcellularLocation>
        <location evidence="2">Secreted</location>
    </subcellularLocation>
</comment>
<comment type="similarity">
    <text evidence="6">Belongs to the cutinase family.</text>
</comment>
<proteinExistence type="inferred from homology"/>
<reference key="1">
    <citation type="journal article" date="2008" name="PLoS Genet.">
        <title>Genomic islands in the pathogenic filamentous fungus Aspergillus fumigatus.</title>
        <authorList>
            <person name="Fedorova N.D."/>
            <person name="Khaldi N."/>
            <person name="Joardar V.S."/>
            <person name="Maiti R."/>
            <person name="Amedeo P."/>
            <person name="Anderson M.J."/>
            <person name="Crabtree J."/>
            <person name="Silva J.C."/>
            <person name="Badger J.H."/>
            <person name="Albarraq A."/>
            <person name="Angiuoli S."/>
            <person name="Bussey H."/>
            <person name="Bowyer P."/>
            <person name="Cotty P.J."/>
            <person name="Dyer P.S."/>
            <person name="Egan A."/>
            <person name="Galens K."/>
            <person name="Fraser-Liggett C.M."/>
            <person name="Haas B.J."/>
            <person name="Inman J.M."/>
            <person name="Kent R."/>
            <person name="Lemieux S."/>
            <person name="Malavazi I."/>
            <person name="Orvis J."/>
            <person name="Roemer T."/>
            <person name="Ronning C.M."/>
            <person name="Sundaram J.P."/>
            <person name="Sutton G."/>
            <person name="Turner G."/>
            <person name="Venter J.C."/>
            <person name="White O.R."/>
            <person name="Whitty B.R."/>
            <person name="Youngman P."/>
            <person name="Wolfe K.H."/>
            <person name="Goldman G.H."/>
            <person name="Wortman J.R."/>
            <person name="Jiang B."/>
            <person name="Denning D.W."/>
            <person name="Nierman W.C."/>
        </authorList>
    </citation>
    <scope>NUCLEOTIDE SEQUENCE [LARGE SCALE GENOMIC DNA]</scope>
    <source>
        <strain>CBS 144.89 / FGSC A1163 / CEA10</strain>
    </source>
</reference>
<evidence type="ECO:0000250" key="1">
    <source>
        <dbReference type="UniProtKB" id="P00590"/>
    </source>
</evidence>
<evidence type="ECO:0000250" key="2">
    <source>
        <dbReference type="UniProtKB" id="P11373"/>
    </source>
</evidence>
<evidence type="ECO:0000250" key="3">
    <source>
        <dbReference type="UniProtKB" id="P52956"/>
    </source>
</evidence>
<evidence type="ECO:0000255" key="4"/>
<evidence type="ECO:0000255" key="5">
    <source>
        <dbReference type="PROSITE-ProRule" id="PRU10108"/>
    </source>
</evidence>
<evidence type="ECO:0000305" key="6"/>